<name>SPD1_TRICX</name>
<feature type="chain" id="PRO_0000221446" description="Spidroin-1">
    <location>
        <begin position="1" status="less than"/>
        <end position="748"/>
    </location>
</feature>
<feature type="repeat" description="1">
    <location>
        <begin position="1"/>
        <end position="25"/>
    </location>
</feature>
<feature type="repeat" description="2">
    <location>
        <begin position="26"/>
        <end position="38"/>
    </location>
</feature>
<feature type="repeat" description="3">
    <location>
        <begin position="39"/>
        <end position="66"/>
    </location>
</feature>
<feature type="repeat" description="4">
    <location>
        <begin position="67"/>
        <end position="96"/>
    </location>
</feature>
<feature type="repeat" description="5">
    <location>
        <begin position="97"/>
        <end position="130"/>
    </location>
</feature>
<feature type="repeat" description="6">
    <location>
        <begin position="131"/>
        <end position="158"/>
    </location>
</feature>
<feature type="repeat" description="7">
    <location>
        <begin position="159"/>
        <end position="191"/>
    </location>
</feature>
<feature type="repeat" description="8">
    <location>
        <begin position="192"/>
        <end position="204"/>
    </location>
</feature>
<feature type="repeat" description="9">
    <location>
        <begin position="205"/>
        <end position="235"/>
    </location>
</feature>
<feature type="repeat" description="10">
    <location>
        <begin position="236"/>
        <end position="262"/>
    </location>
</feature>
<feature type="repeat" description="11">
    <location>
        <begin position="263"/>
        <end position="292"/>
    </location>
</feature>
<feature type="repeat" description="12">
    <location>
        <begin position="293"/>
        <end position="305"/>
    </location>
</feature>
<feature type="repeat" description="13">
    <location>
        <begin position="306"/>
        <end position="333"/>
    </location>
</feature>
<feature type="repeat" description="14">
    <location>
        <begin position="334"/>
        <end position="360"/>
    </location>
</feature>
<feature type="repeat" description="15">
    <location>
        <begin position="361"/>
        <end position="394"/>
    </location>
</feature>
<feature type="repeat" description="16">
    <location>
        <begin position="395"/>
        <end position="424"/>
    </location>
</feature>
<feature type="repeat" description="17">
    <location>
        <begin position="425"/>
        <end position="458"/>
    </location>
</feature>
<feature type="repeat" description="18">
    <location>
        <begin position="459"/>
        <end position="485"/>
    </location>
</feature>
<feature type="repeat" description="19">
    <location>
        <begin position="486"/>
        <end position="512"/>
    </location>
</feature>
<feature type="repeat" description="20">
    <location>
        <begin position="513"/>
        <end position="525"/>
    </location>
</feature>
<feature type="repeat" description="21">
    <location>
        <begin position="526"/>
        <end position="555"/>
    </location>
</feature>
<feature type="repeat" description="22">
    <location>
        <begin position="556"/>
        <end position="582"/>
    </location>
</feature>
<feature type="repeat" description="23">
    <location>
        <begin position="583"/>
        <end position="612"/>
    </location>
</feature>
<feature type="repeat" description="24">
    <location>
        <begin position="613"/>
        <end position="642"/>
    </location>
</feature>
<feature type="repeat" description="25">
    <location>
        <begin position="643"/>
        <end position="655"/>
    </location>
</feature>
<feature type="region of interest" description="25 X approximate tandem repeats">
    <location>
        <begin position="1"/>
        <end position="655"/>
    </location>
</feature>
<feature type="sequence conflict" description="In Ref. 1; AAA29380." evidence="1" ref="1">
    <original>V</original>
    <variation>L</variation>
    <location>
        <position position="662"/>
    </location>
</feature>
<feature type="sequence conflict" description="In Ref. 1; AAA29380." evidence="1" ref="1">
    <original>S</original>
    <variation>T</variation>
    <location>
        <position position="672"/>
    </location>
</feature>
<feature type="non-terminal residue">
    <location>
        <position position="1"/>
    </location>
</feature>
<protein>
    <recommendedName>
        <fullName>Spidroin-1</fullName>
    </recommendedName>
    <alternativeName>
        <fullName>Dragline silk fibroin 1</fullName>
    </alternativeName>
</protein>
<comment type="function">
    <text>Spiders' major ampullate silk possesses unique characteristics of strength and elasticity. Fibroin consists of pseudocrystalline regions of antiparallel beta-sheet interspersed with elastic amorphous segments.</text>
</comment>
<comment type="subunit">
    <text>Major subunit, with spidroin 2, of the dragline silk.</text>
</comment>
<comment type="subcellular location">
    <subcellularLocation>
        <location>Secreted</location>
        <location>Extracellular space</location>
    </subcellularLocation>
</comment>
<comment type="domain">
    <text>Highly repetitive protein characterized by regions of polyalanine and glycine-rich repeating units.</text>
</comment>
<comment type="similarity">
    <text evidence="1">Belongs to the silk fibroin family.</text>
</comment>
<comment type="online information" name="Protein Spotlight">
    <link uri="https://www.proteinspotlight.org/back_issues/024"/>
    <text>The tiptoe of an airbus - Issue 24 of July 2002</text>
</comment>
<evidence type="ECO:0000305" key="1"/>
<keyword id="KW-0903">Direct protein sequencing</keyword>
<keyword id="KW-0677">Repeat</keyword>
<keyword id="KW-0964">Secreted</keyword>
<keyword id="KW-0737">Silk protein</keyword>
<sequence length="748" mass="60585">QGAGAAAAAAGGAGQGGYGGLGGQGAGQGGYGGLGGQGAGQGAGAAAAAAAGGAGQGGYGGLGSQGAGRGGQGAGAAAAAAGGAGQGGYGGLGSQGAGRGGLGGQGAGAAAAAAAGGAGQGGYGGLGNQGAGRGGQGAAAAAAGGAGQGGYGGLGSQGAGRGGLGGQGAGAAAAAAGGAGQGGYGGLGGQGAGQGGYGGLGSQGAGRGGLGGQGAGAAAAAAAGGAGQGGLGGQGAGQGAGASAAAAGGAGQGGYGGLGSQGAGRGGEGAGAAAAAAGGAGQGGYGGLGGQGAGQGGYGGLGSQGAGRGGLGGQGAGAAAAGGAGQGGLGGQGAGQGAGAAAAAAGGAGQGGYGGLGSQGAGRGGLGGQGAGAVAAAAAGGAGQGGYGGLGSQGAGRGGQGAGAAAAAAGGAGQRGYGGLGNQGAGRGGLGGQGAGAAAAAAAGGAGQGGYGGLGNQGAGRGGQGAAAAAGGAGQGGYGGLGSQGAGRGGQGAGAAAAAAVGAGQEGIRGQGAGQGGYGGLGSQGSGRGGLGGQGAGAAAAAAGGAGQGGLGGQGAGQGAGAAAAAAGGVRQGGYGGLGSQGAGRGGQGAGAAAAAAGGAGQGGYGGLGGQGVGRGGLGGQGAGAAAAGGAGQGGYGGVGSGASAASAAASRLSSPQASSRVSSAVSNLVASGPTNSAALSSTISNVVSQIGASNPGLSGCDVLIQALLEVVSALIQILGSSSIGQVNYGSAGQATQIVGQSVYQALG</sequence>
<proteinExistence type="evidence at protein level"/>
<dbReference type="EMBL" id="M37137">
    <property type="protein sequence ID" value="AAA29380.2"/>
    <property type="molecule type" value="mRNA"/>
</dbReference>
<dbReference type="EMBL" id="U03848">
    <property type="protein sequence ID" value="AAB60212.1"/>
    <property type="molecule type" value="Unassigned_DNA"/>
</dbReference>
<dbReference type="PIR" id="A36068">
    <property type="entry name" value="A36068"/>
</dbReference>
<dbReference type="PCDDB" id="P19837"/>
<dbReference type="SMR" id="P19837"/>
<dbReference type="GO" id="GO:0005576">
    <property type="term" value="C:extracellular region"/>
    <property type="evidence" value="ECO:0007669"/>
    <property type="project" value="UniProtKB-SubCell"/>
</dbReference>
<dbReference type="Gene3D" id="1.10.10.1350">
    <property type="entry name" value="Spidroin domain, C-terminal domain"/>
    <property type="match status" value="1"/>
</dbReference>
<dbReference type="InterPro" id="IPR021001">
    <property type="entry name" value="Spidroin_C"/>
</dbReference>
<dbReference type="InterPro" id="IPR038542">
    <property type="entry name" value="Spidroin_C_sf"/>
</dbReference>
<dbReference type="Pfam" id="PF11260">
    <property type="entry name" value="Spidroin_MaSp"/>
    <property type="match status" value="1"/>
</dbReference>
<reference key="1">
    <citation type="journal article" date="1990" name="Proc. Natl. Acad. Sci. U.S.A.">
        <title>Structure of a protein superfiber: spider dragline silk.</title>
        <authorList>
            <person name="Xu M."/>
            <person name="Lewis R.V."/>
        </authorList>
    </citation>
    <scope>NUCLEOTIDE SEQUENCE [MRNA]</scope>
    <scope>PARTIAL PROTEIN SEQUENCE</scope>
</reference>
<reference key="2">
    <citation type="submission" date="2009-08" db="EMBL/GenBank/DDBJ databases">
        <authorList>
            <person name="Xu M."/>
            <person name="Lewis R.V."/>
        </authorList>
    </citation>
    <scope>SEQUENCE REVISION TO C-TERMINUS</scope>
</reference>
<reference key="3">
    <citation type="journal article" date="1994" name="J. Biol. Chem.">
        <title>Sequence conservation in the C-terminal region of spider silk proteins (Spidroin) from Nephila clavipes (Tetragnathidae) and Araneus bicentenarius (Araneidae).</title>
        <authorList>
            <person name="Beckwitt R."/>
            <person name="Arcidiacono S."/>
        </authorList>
    </citation>
    <scope>NUCLEOTIDE SEQUENCE OF 653-747</scope>
</reference>
<accession>P19837</accession>
<organism>
    <name type="scientific">Trichonephila clavipes</name>
    <name type="common">Golden silk orbweaver</name>
    <name type="synonym">Nephila clavipes</name>
    <dbReference type="NCBI Taxonomy" id="2585209"/>
    <lineage>
        <taxon>Eukaryota</taxon>
        <taxon>Metazoa</taxon>
        <taxon>Ecdysozoa</taxon>
        <taxon>Arthropoda</taxon>
        <taxon>Chelicerata</taxon>
        <taxon>Arachnida</taxon>
        <taxon>Araneae</taxon>
        <taxon>Araneomorphae</taxon>
        <taxon>Entelegynae</taxon>
        <taxon>Araneoidea</taxon>
        <taxon>Nephilidae</taxon>
        <taxon>Trichonephila</taxon>
    </lineage>
</organism>